<name>RAS1_DROER</name>
<feature type="chain" id="PRO_0000363708" description="Ras-like protein 1" evidence="2">
    <location>
        <begin position="1"/>
        <end position="186"/>
    </location>
</feature>
<feature type="propeptide" id="PRO_0000363709" description="Removed in mature form" evidence="2">
    <location>
        <begin position="187"/>
        <end position="189"/>
    </location>
</feature>
<feature type="short sequence motif" description="Effector region">
    <location>
        <begin position="32"/>
        <end position="40"/>
    </location>
</feature>
<feature type="binding site" evidence="1">
    <location>
        <begin position="10"/>
        <end position="17"/>
    </location>
    <ligand>
        <name>GTP</name>
        <dbReference type="ChEBI" id="CHEBI:37565"/>
    </ligand>
</feature>
<feature type="binding site" evidence="1">
    <location>
        <begin position="57"/>
        <end position="61"/>
    </location>
    <ligand>
        <name>GTP</name>
        <dbReference type="ChEBI" id="CHEBI:37565"/>
    </ligand>
</feature>
<feature type="binding site" evidence="1">
    <location>
        <begin position="116"/>
        <end position="119"/>
    </location>
    <ligand>
        <name>GTP</name>
        <dbReference type="ChEBI" id="CHEBI:37565"/>
    </ligand>
</feature>
<feature type="modified residue" description="Cysteine methyl ester" evidence="2">
    <location>
        <position position="186"/>
    </location>
</feature>
<feature type="lipid moiety-binding region" description="S-geranylgeranyl cysteine" evidence="2">
    <location>
        <position position="186"/>
    </location>
</feature>
<organism>
    <name type="scientific">Drosophila erecta</name>
    <name type="common">Fruit fly</name>
    <dbReference type="NCBI Taxonomy" id="7220"/>
    <lineage>
        <taxon>Eukaryota</taxon>
        <taxon>Metazoa</taxon>
        <taxon>Ecdysozoa</taxon>
        <taxon>Arthropoda</taxon>
        <taxon>Hexapoda</taxon>
        <taxon>Insecta</taxon>
        <taxon>Pterygota</taxon>
        <taxon>Neoptera</taxon>
        <taxon>Endopterygota</taxon>
        <taxon>Diptera</taxon>
        <taxon>Brachycera</taxon>
        <taxon>Muscomorpha</taxon>
        <taxon>Ephydroidea</taxon>
        <taxon>Drosophilidae</taxon>
        <taxon>Drosophila</taxon>
        <taxon>Sophophora</taxon>
    </lineage>
</organism>
<sequence length="189" mass="21594">MTEYKLVVVGAGGVGKSALTIQLIQNHFVDEYDPTIEDSYRKQVVIDGETCLLDILDTAGQEEYSAMRDQYMRTGEGFLLVFAVNSAKSFEDIGTYREQIKRVKDAEEVPMVLVGNKCDLASWNVNNEQAREVAKQYGIPYIETSAKTRMGVDDAFYTLVREIRKDKDNKGRRGRKMNKPNRRFKCKML</sequence>
<reference evidence="4" key="1">
    <citation type="journal article" date="2007" name="Nature">
        <title>Evolution of genes and genomes on the Drosophila phylogeny.</title>
        <authorList>
            <consortium name="Drosophila 12 genomes consortium"/>
        </authorList>
    </citation>
    <scope>NUCLEOTIDE SEQUENCE [LARGE SCALE GENOMIC DNA]</scope>
    <source>
        <strain evidence="4">Tucson 14021-0224.01</strain>
    </source>
</reference>
<proteinExistence type="inferred from homology"/>
<accession>B3NZR4</accession>
<gene>
    <name evidence="2" type="primary">Ras85D</name>
    <name type="ORF">GG17366</name>
</gene>
<evidence type="ECO:0000250" key="1">
    <source>
        <dbReference type="UniProtKB" id="P01112"/>
    </source>
</evidence>
<evidence type="ECO:0000250" key="2">
    <source>
        <dbReference type="UniProtKB" id="P08646"/>
    </source>
</evidence>
<evidence type="ECO:0000255" key="3"/>
<evidence type="ECO:0000312" key="4">
    <source>
        <dbReference type="EMBL" id="EDV49774.1"/>
    </source>
</evidence>
<comment type="function">
    <text evidence="1 2">Ras proteins bind GDP/GTP and possess intrinsic GTPase activity. Plays a role in eye development by regulating cell growth, survival of postmitotic ommatidial cells and differentiation of photoreceptor cells. During larval development, mediates Ptth/tor signaling leading to the production of ecdysone, a hormone required for the initiation of metamorphosis.</text>
</comment>
<comment type="catalytic activity">
    <reaction evidence="1">
        <text>GTP + H2O = GDP + phosphate + H(+)</text>
        <dbReference type="Rhea" id="RHEA:19669"/>
        <dbReference type="ChEBI" id="CHEBI:15377"/>
        <dbReference type="ChEBI" id="CHEBI:15378"/>
        <dbReference type="ChEBI" id="CHEBI:37565"/>
        <dbReference type="ChEBI" id="CHEBI:43474"/>
        <dbReference type="ChEBI" id="CHEBI:58189"/>
        <dbReference type="EC" id="3.6.5.2"/>
    </reaction>
</comment>
<comment type="activity regulation">
    <text>Alternates between an inactive form bound to GDP and an active form bound to GTP. Activated by a guanine nucleotide-exchange factor (GEF) and inactivated by a GTPase-activating protein (GAP).</text>
</comment>
<comment type="subcellular location">
    <subcellularLocation>
        <location evidence="2">Cell membrane</location>
        <topology evidence="2">Lipid-anchor</topology>
        <orientation evidence="2">Cytoplasmic side</orientation>
    </subcellularLocation>
</comment>
<comment type="similarity">
    <text evidence="3">Belongs to the small GTPase superfamily. Ras family.</text>
</comment>
<keyword id="KW-1003">Cell membrane</keyword>
<keyword id="KW-0342">GTP-binding</keyword>
<keyword id="KW-0378">Hydrolase</keyword>
<keyword id="KW-0449">Lipoprotein</keyword>
<keyword id="KW-0472">Membrane</keyword>
<keyword id="KW-0488">Methylation</keyword>
<keyword id="KW-0547">Nucleotide-binding</keyword>
<keyword id="KW-0636">Prenylation</keyword>
<dbReference type="EC" id="3.6.5.2" evidence="1"/>
<dbReference type="EMBL" id="CH954181">
    <property type="protein sequence ID" value="EDV49774.1"/>
    <property type="molecule type" value="Genomic_DNA"/>
</dbReference>
<dbReference type="SMR" id="B3NZR4"/>
<dbReference type="EnsemblMetazoa" id="FBtr0137420">
    <property type="protein sequence ID" value="FBpp0135912"/>
    <property type="gene ID" value="FBgn0109593"/>
</dbReference>
<dbReference type="EnsemblMetazoa" id="XM_001980780.3">
    <property type="protein sequence ID" value="XP_001980816.1"/>
    <property type="gene ID" value="LOC6551803"/>
</dbReference>
<dbReference type="GeneID" id="6551803"/>
<dbReference type="KEGG" id="der:6551803"/>
<dbReference type="CTD" id="41140"/>
<dbReference type="eggNOG" id="KOG0395">
    <property type="taxonomic scope" value="Eukaryota"/>
</dbReference>
<dbReference type="HOGENOM" id="CLU_041217_9_8_1"/>
<dbReference type="OMA" id="CCGGCVI"/>
<dbReference type="OrthoDB" id="5976022at2759"/>
<dbReference type="PhylomeDB" id="B3NZR4"/>
<dbReference type="ChiTaRS" id="Ras85D">
    <property type="organism name" value="fly"/>
</dbReference>
<dbReference type="Proteomes" id="UP000008711">
    <property type="component" value="Unassembled WGS sequence"/>
</dbReference>
<dbReference type="GO" id="GO:0016020">
    <property type="term" value="C:membrane"/>
    <property type="evidence" value="ECO:0000250"/>
    <property type="project" value="UniProtKB"/>
</dbReference>
<dbReference type="GO" id="GO:0005886">
    <property type="term" value="C:plasma membrane"/>
    <property type="evidence" value="ECO:0007669"/>
    <property type="project" value="UniProtKB-SubCell"/>
</dbReference>
<dbReference type="GO" id="GO:0003925">
    <property type="term" value="F:G protein activity"/>
    <property type="evidence" value="ECO:0007669"/>
    <property type="project" value="UniProtKB-EC"/>
</dbReference>
<dbReference type="GO" id="GO:0005525">
    <property type="term" value="F:GTP binding"/>
    <property type="evidence" value="ECO:0007669"/>
    <property type="project" value="UniProtKB-KW"/>
</dbReference>
<dbReference type="GO" id="GO:0043539">
    <property type="term" value="F:protein serine/threonine kinase activator activity"/>
    <property type="evidence" value="ECO:0007669"/>
    <property type="project" value="EnsemblMetazoa"/>
</dbReference>
<dbReference type="GO" id="GO:0007298">
    <property type="term" value="P:border follicle cell migration"/>
    <property type="evidence" value="ECO:0007669"/>
    <property type="project" value="EnsemblMetazoa"/>
</dbReference>
<dbReference type="GO" id="GO:0009267">
    <property type="term" value="P:cellular response to starvation"/>
    <property type="evidence" value="ECO:0007669"/>
    <property type="project" value="EnsemblMetazoa"/>
</dbReference>
<dbReference type="GO" id="GO:0030381">
    <property type="term" value="P:chorion-containing eggshell pattern formation"/>
    <property type="evidence" value="ECO:0007669"/>
    <property type="project" value="EnsemblMetazoa"/>
</dbReference>
<dbReference type="GO" id="GO:0051607">
    <property type="term" value="P:defense response to virus"/>
    <property type="evidence" value="ECO:0007669"/>
    <property type="project" value="EnsemblMetazoa"/>
</dbReference>
<dbReference type="GO" id="GO:0008340">
    <property type="term" value="P:determination of adult lifespan"/>
    <property type="evidence" value="ECO:0007669"/>
    <property type="project" value="EnsemblMetazoa"/>
</dbReference>
<dbReference type="GO" id="GO:0007395">
    <property type="term" value="P:dorsal closure, spreading of leading edge cells"/>
    <property type="evidence" value="ECO:0007669"/>
    <property type="project" value="EnsemblMetazoa"/>
</dbReference>
<dbReference type="GO" id="GO:0007173">
    <property type="term" value="P:epidermal growth factor receptor signaling pathway"/>
    <property type="evidence" value="ECO:0007669"/>
    <property type="project" value="EnsemblMetazoa"/>
</dbReference>
<dbReference type="GO" id="GO:0007427">
    <property type="term" value="P:epithelial cell migration, open tracheal system"/>
    <property type="evidence" value="ECO:0007669"/>
    <property type="project" value="EnsemblMetazoa"/>
</dbReference>
<dbReference type="GO" id="GO:0035088">
    <property type="term" value="P:establishment or maintenance of apical/basal cell polarity"/>
    <property type="evidence" value="ECO:0007669"/>
    <property type="project" value="EnsemblMetazoa"/>
</dbReference>
<dbReference type="GO" id="GO:0007455">
    <property type="term" value="P:eye-antennal disc morphogenesis"/>
    <property type="evidence" value="ECO:0007669"/>
    <property type="project" value="EnsemblMetazoa"/>
</dbReference>
<dbReference type="GO" id="GO:0008543">
    <property type="term" value="P:fibroblast growth factor receptor signaling pathway"/>
    <property type="evidence" value="ECO:0007669"/>
    <property type="project" value="EnsemblMetazoa"/>
</dbReference>
<dbReference type="GO" id="GO:0035099">
    <property type="term" value="P:hemocyte migration"/>
    <property type="evidence" value="ECO:0007669"/>
    <property type="project" value="EnsemblMetazoa"/>
</dbReference>
<dbReference type="GO" id="GO:0008586">
    <property type="term" value="P:imaginal disc-derived wing vein morphogenesis"/>
    <property type="evidence" value="ECO:0007669"/>
    <property type="project" value="EnsemblMetazoa"/>
</dbReference>
<dbReference type="GO" id="GO:0007474">
    <property type="term" value="P:imaginal disc-derived wing vein specification"/>
    <property type="evidence" value="ECO:0007669"/>
    <property type="project" value="EnsemblMetazoa"/>
</dbReference>
<dbReference type="GO" id="GO:0002168">
    <property type="term" value="P:instar larval development"/>
    <property type="evidence" value="ECO:0007669"/>
    <property type="project" value="EnsemblMetazoa"/>
</dbReference>
<dbReference type="GO" id="GO:0036335">
    <property type="term" value="P:intestinal stem cell homeostasis"/>
    <property type="evidence" value="ECO:0007669"/>
    <property type="project" value="EnsemblMetazoa"/>
</dbReference>
<dbReference type="GO" id="GO:0007479">
    <property type="term" value="P:leg disc proximal/distal pattern formation"/>
    <property type="evidence" value="ECO:0007669"/>
    <property type="project" value="EnsemblMetazoa"/>
</dbReference>
<dbReference type="GO" id="GO:0035170">
    <property type="term" value="P:lymph gland crystal cell differentiation"/>
    <property type="evidence" value="ECO:0007669"/>
    <property type="project" value="EnsemblMetazoa"/>
</dbReference>
<dbReference type="GO" id="GO:0035169">
    <property type="term" value="P:lymph gland plasmatocyte differentiation"/>
    <property type="evidence" value="ECO:0007669"/>
    <property type="project" value="EnsemblMetazoa"/>
</dbReference>
<dbReference type="GO" id="GO:0072002">
    <property type="term" value="P:Malpighian tubule development"/>
    <property type="evidence" value="ECO:0007669"/>
    <property type="project" value="EnsemblMetazoa"/>
</dbReference>
<dbReference type="GO" id="GO:0000165">
    <property type="term" value="P:MAPK cascade"/>
    <property type="evidence" value="ECO:0007669"/>
    <property type="project" value="EnsemblMetazoa"/>
</dbReference>
<dbReference type="GO" id="GO:0001710">
    <property type="term" value="P:mesodermal cell fate commitment"/>
    <property type="evidence" value="ECO:0007669"/>
    <property type="project" value="EnsemblMetazoa"/>
</dbReference>
<dbReference type="GO" id="GO:0048626">
    <property type="term" value="P:myoblast fate specification"/>
    <property type="evidence" value="ECO:0007669"/>
    <property type="project" value="EnsemblMetazoa"/>
</dbReference>
<dbReference type="GO" id="GO:2001234">
    <property type="term" value="P:negative regulation of apoptotic signaling pathway"/>
    <property type="evidence" value="ECO:0007669"/>
    <property type="project" value="EnsemblMetazoa"/>
</dbReference>
<dbReference type="GO" id="GO:0046673">
    <property type="term" value="P:negative regulation of compound eye retinal cell programmed cell death"/>
    <property type="evidence" value="ECO:0007669"/>
    <property type="project" value="EnsemblMetazoa"/>
</dbReference>
<dbReference type="GO" id="GO:0010629">
    <property type="term" value="P:negative regulation of gene expression"/>
    <property type="evidence" value="ECO:0007669"/>
    <property type="project" value="EnsemblMetazoa"/>
</dbReference>
<dbReference type="GO" id="GO:0016242">
    <property type="term" value="P:negative regulation of macroautophagy"/>
    <property type="evidence" value="ECO:0007669"/>
    <property type="project" value="EnsemblMetazoa"/>
</dbReference>
<dbReference type="GO" id="GO:0016318">
    <property type="term" value="P:ommatidial rotation"/>
    <property type="evidence" value="ECO:0007669"/>
    <property type="project" value="EnsemblMetazoa"/>
</dbReference>
<dbReference type="GO" id="GO:0007309">
    <property type="term" value="P:oocyte axis specification"/>
    <property type="evidence" value="ECO:0007669"/>
    <property type="project" value="EnsemblMetazoa"/>
</dbReference>
<dbReference type="GO" id="GO:0007422">
    <property type="term" value="P:peripheral nervous system development"/>
    <property type="evidence" value="ECO:0007669"/>
    <property type="project" value="EnsemblMetazoa"/>
</dbReference>
<dbReference type="GO" id="GO:0043703">
    <property type="term" value="P:photoreceptor cell fate determination"/>
    <property type="evidence" value="ECO:0007669"/>
    <property type="project" value="EnsemblMetazoa"/>
</dbReference>
<dbReference type="GO" id="GO:0008594">
    <property type="term" value="P:photoreceptor cell morphogenesis"/>
    <property type="evidence" value="ECO:0007669"/>
    <property type="project" value="EnsemblMetazoa"/>
</dbReference>
<dbReference type="GO" id="GO:0045793">
    <property type="term" value="P:positive regulation of cell size"/>
    <property type="evidence" value="ECO:0007669"/>
    <property type="project" value="EnsemblMetazoa"/>
</dbReference>
<dbReference type="GO" id="GO:0070374">
    <property type="term" value="P:positive regulation of ERK1 and ERK2 cascade"/>
    <property type="evidence" value="ECO:0007669"/>
    <property type="project" value="EnsemblMetazoa"/>
</dbReference>
<dbReference type="GO" id="GO:0035208">
    <property type="term" value="P:positive regulation of hemocyte proliferation"/>
    <property type="evidence" value="ECO:0007669"/>
    <property type="project" value="EnsemblMetazoa"/>
</dbReference>
<dbReference type="GO" id="GO:0046534">
    <property type="term" value="P:positive regulation of photoreceptor cell differentiation"/>
    <property type="evidence" value="ECO:0007669"/>
    <property type="project" value="EnsemblMetazoa"/>
</dbReference>
<dbReference type="GO" id="GO:1904263">
    <property type="term" value="P:positive regulation of TORC1 signaling"/>
    <property type="evidence" value="ECO:0007669"/>
    <property type="project" value="EnsemblMetazoa"/>
</dbReference>
<dbReference type="GO" id="GO:0045465">
    <property type="term" value="P:R8 cell differentiation"/>
    <property type="evidence" value="ECO:0007669"/>
    <property type="project" value="EnsemblMetazoa"/>
</dbReference>
<dbReference type="GO" id="GO:0007265">
    <property type="term" value="P:Ras protein signal transduction"/>
    <property type="evidence" value="ECO:0007669"/>
    <property type="project" value="EnsemblMetazoa"/>
</dbReference>
<dbReference type="GO" id="GO:0040014">
    <property type="term" value="P:regulation of multicellular organism growth"/>
    <property type="evidence" value="ECO:0007669"/>
    <property type="project" value="EnsemblMetazoa"/>
</dbReference>
<dbReference type="GO" id="GO:0045500">
    <property type="term" value="P:sevenless signaling pathway"/>
    <property type="evidence" value="ECO:0007669"/>
    <property type="project" value="EnsemblMetazoa"/>
</dbReference>
<dbReference type="GO" id="GO:0048865">
    <property type="term" value="P:stem cell fate commitment"/>
    <property type="evidence" value="ECO:0007669"/>
    <property type="project" value="EnsemblMetazoa"/>
</dbReference>
<dbReference type="GO" id="GO:0072089">
    <property type="term" value="P:stem cell proliferation"/>
    <property type="evidence" value="ECO:0007669"/>
    <property type="project" value="EnsemblMetazoa"/>
</dbReference>
<dbReference type="GO" id="GO:0007430">
    <property type="term" value="P:terminal branching, open tracheal system"/>
    <property type="evidence" value="ECO:0007669"/>
    <property type="project" value="EnsemblMetazoa"/>
</dbReference>
<dbReference type="GO" id="GO:0007362">
    <property type="term" value="P:terminal region determination"/>
    <property type="evidence" value="ECO:0007669"/>
    <property type="project" value="EnsemblMetazoa"/>
</dbReference>
<dbReference type="GO" id="GO:0008293">
    <property type="term" value="P:torso signaling pathway"/>
    <property type="evidence" value="ECO:0007669"/>
    <property type="project" value="EnsemblMetazoa"/>
</dbReference>
<dbReference type="GO" id="GO:0060438">
    <property type="term" value="P:trachea development"/>
    <property type="evidence" value="ECO:0007669"/>
    <property type="project" value="EnsemblMetazoa"/>
</dbReference>
<dbReference type="GO" id="GO:0007426">
    <property type="term" value="P:tracheal outgrowth, open tracheal system"/>
    <property type="evidence" value="ECO:0007669"/>
    <property type="project" value="EnsemblMetazoa"/>
</dbReference>
<dbReference type="GO" id="GO:0048010">
    <property type="term" value="P:vascular endothelial growth factor receptor signaling pathway"/>
    <property type="evidence" value="ECO:0007669"/>
    <property type="project" value="EnsemblMetazoa"/>
</dbReference>
<dbReference type="GO" id="GO:0035313">
    <property type="term" value="P:wound healing, spreading of epidermal cells"/>
    <property type="evidence" value="ECO:0007669"/>
    <property type="project" value="EnsemblMetazoa"/>
</dbReference>
<dbReference type="CDD" id="cd04138">
    <property type="entry name" value="H_N_K_Ras_like"/>
    <property type="match status" value="1"/>
</dbReference>
<dbReference type="FunFam" id="3.40.50.300:FF:000096">
    <property type="entry name" value="KRAS proto-oncogene, GTPase"/>
    <property type="match status" value="1"/>
</dbReference>
<dbReference type="Gene3D" id="3.40.50.300">
    <property type="entry name" value="P-loop containing nucleotide triphosphate hydrolases"/>
    <property type="match status" value="1"/>
</dbReference>
<dbReference type="InterPro" id="IPR027417">
    <property type="entry name" value="P-loop_NTPase"/>
</dbReference>
<dbReference type="InterPro" id="IPR005225">
    <property type="entry name" value="Small_GTP-bd"/>
</dbReference>
<dbReference type="InterPro" id="IPR001806">
    <property type="entry name" value="Small_GTPase"/>
</dbReference>
<dbReference type="InterPro" id="IPR020849">
    <property type="entry name" value="Small_GTPase_Ras-type"/>
</dbReference>
<dbReference type="NCBIfam" id="TIGR00231">
    <property type="entry name" value="small_GTP"/>
    <property type="match status" value="1"/>
</dbReference>
<dbReference type="PANTHER" id="PTHR24070">
    <property type="entry name" value="RAS, DI-RAS, AND RHEB FAMILY MEMBERS OF SMALL GTPASE SUPERFAMILY"/>
    <property type="match status" value="1"/>
</dbReference>
<dbReference type="Pfam" id="PF00071">
    <property type="entry name" value="Ras"/>
    <property type="match status" value="1"/>
</dbReference>
<dbReference type="PRINTS" id="PR00449">
    <property type="entry name" value="RASTRNSFRMNG"/>
</dbReference>
<dbReference type="SMART" id="SM00175">
    <property type="entry name" value="RAB"/>
    <property type="match status" value="1"/>
</dbReference>
<dbReference type="SMART" id="SM00176">
    <property type="entry name" value="RAN"/>
    <property type="match status" value="1"/>
</dbReference>
<dbReference type="SMART" id="SM00173">
    <property type="entry name" value="RAS"/>
    <property type="match status" value="1"/>
</dbReference>
<dbReference type="SMART" id="SM00174">
    <property type="entry name" value="RHO"/>
    <property type="match status" value="1"/>
</dbReference>
<dbReference type="SUPFAM" id="SSF52540">
    <property type="entry name" value="P-loop containing nucleoside triphosphate hydrolases"/>
    <property type="match status" value="1"/>
</dbReference>
<dbReference type="PROSITE" id="PS51421">
    <property type="entry name" value="RAS"/>
    <property type="match status" value="1"/>
</dbReference>
<protein>
    <recommendedName>
        <fullName evidence="2">Ras-like protein 1</fullName>
        <ecNumber evidence="1">3.6.5.2</ecNumber>
    </recommendedName>
</protein>